<protein>
    <recommendedName>
        <fullName>Oligophrenin-1</fullName>
    </recommendedName>
</protein>
<comment type="function">
    <text evidence="1 5">Stimulates GTP hydrolysis of members of the Rho family. Its action on RHOA activity and signaling is implicated in growth and stabilization of dendritic spines, and therefore in synaptic function. Critical for the stabilization of AMPA receptors at postsynaptic sites. Critical for the regulation of synaptic vesicle endocytosis at presynaptic terminals (By similarity). Required for the localization of NR1D1 to dendrites, can suppress its repressor activity and protect it from proteasomal degradation.</text>
</comment>
<comment type="subunit">
    <text evidence="1 5">Interacts with HOMER1. Interacts with AMPA receptor complexes. Interacts with SH3GL2 (endophilin-A1) (By similarity). Interacts (via C-terminus) with NR1D1.</text>
</comment>
<comment type="subcellular location">
    <subcellularLocation>
        <location evidence="5">Postsynapse</location>
    </subcellularLocation>
    <subcellularLocation>
        <location evidence="5">Presynapse</location>
    </subcellularLocation>
    <subcellularLocation>
        <location evidence="5">Cell projection</location>
        <location evidence="5">Axon</location>
    </subcellularLocation>
    <subcellularLocation>
        <location evidence="5">Cell projection</location>
        <location evidence="5">Dendritic spine</location>
    </subcellularLocation>
    <subcellularLocation>
        <location evidence="5">Cell projection</location>
        <location evidence="5">Dendrite</location>
    </subcellularLocation>
    <subcellularLocation>
        <location evidence="5">Cytoplasm</location>
    </subcellularLocation>
    <text evidence="1">Present in both presynaptic and postsynaptic sites.</text>
</comment>
<keyword id="KW-0966">Cell projection</keyword>
<keyword id="KW-0963">Cytoplasm</keyword>
<keyword id="KW-0254">Endocytosis</keyword>
<keyword id="KW-0343">GTPase activation</keyword>
<keyword id="KW-0524">Neurogenesis</keyword>
<keyword id="KW-1185">Reference proteome</keyword>
<keyword id="KW-0770">Synapse</keyword>
<gene>
    <name type="primary">Ophn1</name>
</gene>
<evidence type="ECO:0000250" key="1"/>
<evidence type="ECO:0000255" key="2">
    <source>
        <dbReference type="PROSITE-ProRule" id="PRU00145"/>
    </source>
</evidence>
<evidence type="ECO:0000255" key="3">
    <source>
        <dbReference type="PROSITE-ProRule" id="PRU00172"/>
    </source>
</evidence>
<evidence type="ECO:0000256" key="4">
    <source>
        <dbReference type="SAM" id="MobiDB-lite"/>
    </source>
</evidence>
<evidence type="ECO:0000269" key="5">
    <source>
    </source>
</evidence>
<name>OPHN1_MOUSE</name>
<accession>Q99J31</accession>
<accession>Q544K7</accession>
<sequence length="802" mass="91985">MGHPPLEFSDCYLDSPDFRQRLKYYEEELERTNKFIKDVIKDGSALISAMRNYSSAVQKFSQTLQSFQFDFIGDTLTDDEINIAESFKEFAELLNEVENERMMMVQNASDLLIKPLETFRKEQIGFTKERKKKFEKDGERFYSLLDRHLHLSSKKKESQLLEADLQVDKERHNFFESSLDYVYQIQEVQESKKFNIVEPVLAFLHSLFISNSLTVELTQDFLPYKQQLQLSLQNTRNHFSSTREEMEELKKRMKEAPQTCKLPGQPTIEGYLYTQEKWALGISWAKYYCRYEKETRMLTMIPMEQKPGAKQGPVDLTLKYCVRRKTESIDKRFCFDIETNERPGTITLQAPSEANRRLWMEAMDGKEPIYHTPITKQEEMELNEVGFKFVRKCINFIETKGIKTEGLYRTVGSNIQVQKLLYAFFDPKCPGDVDFHNSDWDIKTITSSLKFYLRNLSEPVMTYKLHKELVSAAKSDNLDYRLGAIHSLVYKLPEKNREMLELLIKHLVNVCEHSKENLMTPSNMGVIFGPTLMRAQEDTVAAMMNIKFQNIVVEILIEHFGKIYLGPPEDSQVPPVPPPRVTARRHKPITISKRLLREKTVFYTSSLDENKDESHHQTPNGTITSNLDPPKLLQHLKPPMQKSGETDPGRKSPSRPVSDCQSEPCLETDVGRLLFRLQDGGTKATPKASNGPVPGSGHTKTSSFHIRRPAPRPMAHHKEGDTDGFSKVRPPGEKQTIIRPPVRPPDPPCRSITPQKPEPKPETGSGNADEIPSSVVASRTRFFETASRKTGSSQGKLPGDES</sequence>
<feature type="chain" id="PRO_0000056761" description="Oligophrenin-1">
    <location>
        <begin position="1"/>
        <end position="802"/>
    </location>
</feature>
<feature type="domain" description="PH" evidence="2">
    <location>
        <begin position="265"/>
        <end position="368"/>
    </location>
</feature>
<feature type="domain" description="Rho-GAP" evidence="3">
    <location>
        <begin position="380"/>
        <end position="564"/>
    </location>
</feature>
<feature type="region of interest" description="Disordered" evidence="4">
    <location>
        <begin position="606"/>
        <end position="665"/>
    </location>
</feature>
<feature type="region of interest" description="Disordered" evidence="4">
    <location>
        <begin position="681"/>
        <end position="802"/>
    </location>
</feature>
<feature type="compositionally biased region" description="Polar residues" evidence="4">
    <location>
        <begin position="617"/>
        <end position="627"/>
    </location>
</feature>
<feature type="compositionally biased region" description="Basic and acidic residues" evidence="4">
    <location>
        <begin position="716"/>
        <end position="732"/>
    </location>
</feature>
<feature type="site" description="Arginine finger; crucial for GTP hydrolysis by stabilizing the transition state" evidence="3">
    <location>
        <position position="409"/>
    </location>
</feature>
<organism>
    <name type="scientific">Mus musculus</name>
    <name type="common">Mouse</name>
    <dbReference type="NCBI Taxonomy" id="10090"/>
    <lineage>
        <taxon>Eukaryota</taxon>
        <taxon>Metazoa</taxon>
        <taxon>Chordata</taxon>
        <taxon>Craniata</taxon>
        <taxon>Vertebrata</taxon>
        <taxon>Euteleostomi</taxon>
        <taxon>Mammalia</taxon>
        <taxon>Eutheria</taxon>
        <taxon>Euarchontoglires</taxon>
        <taxon>Glires</taxon>
        <taxon>Rodentia</taxon>
        <taxon>Myomorpha</taxon>
        <taxon>Muroidea</taxon>
        <taxon>Muridae</taxon>
        <taxon>Murinae</taxon>
        <taxon>Mus</taxon>
        <taxon>Mus</taxon>
    </lineage>
</organism>
<dbReference type="EMBL" id="AK031419">
    <property type="protein sequence ID" value="BAC27395.1"/>
    <property type="molecule type" value="mRNA"/>
</dbReference>
<dbReference type="EMBL" id="AK036038">
    <property type="protein sequence ID" value="BAC29282.1"/>
    <property type="molecule type" value="mRNA"/>
</dbReference>
<dbReference type="EMBL" id="AK087469">
    <property type="protein sequence ID" value="BAC39887.1"/>
    <property type="molecule type" value="mRNA"/>
</dbReference>
<dbReference type="EMBL" id="BC004845">
    <property type="protein sequence ID" value="AAH04845.1"/>
    <property type="molecule type" value="mRNA"/>
</dbReference>
<dbReference type="CCDS" id="CCDS30295.1"/>
<dbReference type="RefSeq" id="NP_001300683.1">
    <property type="nucleotide sequence ID" value="NM_001313754.1"/>
</dbReference>
<dbReference type="RefSeq" id="NP_001300684.1">
    <property type="nucleotide sequence ID" value="NM_001313755.1"/>
</dbReference>
<dbReference type="RefSeq" id="NP_001300685.1">
    <property type="nucleotide sequence ID" value="NM_001313756.1"/>
</dbReference>
<dbReference type="RefSeq" id="NP_443208.1">
    <property type="nucleotide sequence ID" value="NM_052976.4"/>
</dbReference>
<dbReference type="SMR" id="Q99J31"/>
<dbReference type="BioGRID" id="220466">
    <property type="interactions" value="36"/>
</dbReference>
<dbReference type="FunCoup" id="Q99J31">
    <property type="interactions" value="1215"/>
</dbReference>
<dbReference type="IntAct" id="Q99J31">
    <property type="interactions" value="5"/>
</dbReference>
<dbReference type="MINT" id="Q99J31"/>
<dbReference type="STRING" id="10090.ENSMUSP00000033560"/>
<dbReference type="GlyGen" id="Q99J31">
    <property type="glycosylation" value="1 site, 1 N-linked glycan (1 site)"/>
</dbReference>
<dbReference type="iPTMnet" id="Q99J31"/>
<dbReference type="PhosphoSitePlus" id="Q99J31"/>
<dbReference type="PaxDb" id="10090-ENSMUSP00000033560"/>
<dbReference type="ProteomicsDB" id="294277"/>
<dbReference type="Pumba" id="Q99J31"/>
<dbReference type="Antibodypedia" id="494">
    <property type="antibodies" value="103 antibodies from 23 providers"/>
</dbReference>
<dbReference type="DNASU" id="94190"/>
<dbReference type="Ensembl" id="ENSMUST00000033560.9">
    <property type="protein sequence ID" value="ENSMUSP00000033560.3"/>
    <property type="gene ID" value="ENSMUSG00000031214.14"/>
</dbReference>
<dbReference type="Ensembl" id="ENSMUST00000113826.8">
    <property type="protein sequence ID" value="ENSMUSP00000109457.2"/>
    <property type="gene ID" value="ENSMUSG00000031214.14"/>
</dbReference>
<dbReference type="GeneID" id="94190"/>
<dbReference type="KEGG" id="mmu:94190"/>
<dbReference type="UCSC" id="uc009tux.1">
    <property type="organism name" value="mouse"/>
</dbReference>
<dbReference type="AGR" id="MGI:2151070"/>
<dbReference type="CTD" id="4983"/>
<dbReference type="MGI" id="MGI:2151070">
    <property type="gene designation" value="Ophn1"/>
</dbReference>
<dbReference type="VEuPathDB" id="HostDB:ENSMUSG00000031214"/>
<dbReference type="eggNOG" id="KOG1451">
    <property type="taxonomic scope" value="Eukaryota"/>
</dbReference>
<dbReference type="GeneTree" id="ENSGT00940000160157"/>
<dbReference type="HOGENOM" id="CLU_011532_2_1_1"/>
<dbReference type="InParanoid" id="Q99J31"/>
<dbReference type="OMA" id="KEAPQMC"/>
<dbReference type="OrthoDB" id="3183924at2759"/>
<dbReference type="PhylomeDB" id="Q99J31"/>
<dbReference type="TreeFam" id="TF316851"/>
<dbReference type="Reactome" id="R-MMU-8980692">
    <property type="pathway name" value="RHOA GTPase cycle"/>
</dbReference>
<dbReference type="Reactome" id="R-MMU-9013026">
    <property type="pathway name" value="RHOB GTPase cycle"/>
</dbReference>
<dbReference type="Reactome" id="R-MMU-9013106">
    <property type="pathway name" value="RHOC GTPase cycle"/>
</dbReference>
<dbReference type="Reactome" id="R-MMU-9013148">
    <property type="pathway name" value="CDC42 GTPase cycle"/>
</dbReference>
<dbReference type="Reactome" id="R-MMU-9013149">
    <property type="pathway name" value="RAC1 GTPase cycle"/>
</dbReference>
<dbReference type="Reactome" id="R-MMU-9013404">
    <property type="pathway name" value="RAC2 GTPase cycle"/>
</dbReference>
<dbReference type="Reactome" id="R-MMU-9013406">
    <property type="pathway name" value="RHOQ GTPase cycle"/>
</dbReference>
<dbReference type="Reactome" id="R-MMU-9013408">
    <property type="pathway name" value="RHOG GTPase cycle"/>
</dbReference>
<dbReference type="Reactome" id="R-MMU-9013409">
    <property type="pathway name" value="RHOJ GTPase cycle"/>
</dbReference>
<dbReference type="Reactome" id="R-MMU-9013423">
    <property type="pathway name" value="RAC3 GTPase cycle"/>
</dbReference>
<dbReference type="BioGRID-ORCS" id="94190">
    <property type="hits" value="0 hits in 76 CRISPR screens"/>
</dbReference>
<dbReference type="ChiTaRS" id="Ophn1">
    <property type="organism name" value="mouse"/>
</dbReference>
<dbReference type="PRO" id="PR:Q99J31"/>
<dbReference type="Proteomes" id="UP000000589">
    <property type="component" value="Chromosome X"/>
</dbReference>
<dbReference type="RNAct" id="Q99J31">
    <property type="molecule type" value="protein"/>
</dbReference>
<dbReference type="Bgee" id="ENSMUSG00000031214">
    <property type="expression patterns" value="Expressed in animal zygote and 243 other cell types or tissues"/>
</dbReference>
<dbReference type="ExpressionAtlas" id="Q99J31">
    <property type="expression patterns" value="baseline and differential"/>
</dbReference>
<dbReference type="GO" id="GO:0015629">
    <property type="term" value="C:actin cytoskeleton"/>
    <property type="evidence" value="ECO:0000314"/>
    <property type="project" value="MGI"/>
</dbReference>
<dbReference type="GO" id="GO:0005737">
    <property type="term" value="C:cytoplasm"/>
    <property type="evidence" value="ECO:0000314"/>
    <property type="project" value="UniProtKB"/>
</dbReference>
<dbReference type="GO" id="GO:0030425">
    <property type="term" value="C:dendrite"/>
    <property type="evidence" value="ECO:0000314"/>
    <property type="project" value="UniProtKB"/>
</dbReference>
<dbReference type="GO" id="GO:0043197">
    <property type="term" value="C:dendritic spine"/>
    <property type="evidence" value="ECO:0000314"/>
    <property type="project" value="UniProtKB"/>
</dbReference>
<dbReference type="GO" id="GO:0098978">
    <property type="term" value="C:glutamatergic synapse"/>
    <property type="evidence" value="ECO:0007669"/>
    <property type="project" value="Ensembl"/>
</dbReference>
<dbReference type="GO" id="GO:0043195">
    <property type="term" value="C:terminal bouton"/>
    <property type="evidence" value="ECO:0000314"/>
    <property type="project" value="MGI"/>
</dbReference>
<dbReference type="GO" id="GO:0003779">
    <property type="term" value="F:actin binding"/>
    <property type="evidence" value="ECO:0000314"/>
    <property type="project" value="MGI"/>
</dbReference>
<dbReference type="GO" id="GO:0005096">
    <property type="term" value="F:GTPase activator activity"/>
    <property type="evidence" value="ECO:0000315"/>
    <property type="project" value="MGI"/>
</dbReference>
<dbReference type="GO" id="GO:0035255">
    <property type="term" value="F:ionotropic glutamate receptor binding"/>
    <property type="evidence" value="ECO:0007669"/>
    <property type="project" value="Ensembl"/>
</dbReference>
<dbReference type="GO" id="GO:0005543">
    <property type="term" value="F:phospholipid binding"/>
    <property type="evidence" value="ECO:0007669"/>
    <property type="project" value="Ensembl"/>
</dbReference>
<dbReference type="GO" id="GO:0030036">
    <property type="term" value="P:actin cytoskeleton organization"/>
    <property type="evidence" value="ECO:0000314"/>
    <property type="project" value="MGI"/>
</dbReference>
<dbReference type="GO" id="GO:0034329">
    <property type="term" value="P:cell junction assembly"/>
    <property type="evidence" value="ECO:0000250"/>
    <property type="project" value="UniProtKB"/>
</dbReference>
<dbReference type="GO" id="GO:0048667">
    <property type="term" value="P:cell morphogenesis involved in neuron differentiation"/>
    <property type="evidence" value="ECO:0007669"/>
    <property type="project" value="Ensembl"/>
</dbReference>
<dbReference type="GO" id="GO:0021707">
    <property type="term" value="P:cerebellar granule cell differentiation"/>
    <property type="evidence" value="ECO:0007669"/>
    <property type="project" value="Ensembl"/>
</dbReference>
<dbReference type="GO" id="GO:0021895">
    <property type="term" value="P:cerebral cortex neuron differentiation"/>
    <property type="evidence" value="ECO:0007669"/>
    <property type="project" value="Ensembl"/>
</dbReference>
<dbReference type="GO" id="GO:0045198">
    <property type="term" value="P:establishment of epithelial cell apical/basal polarity"/>
    <property type="evidence" value="ECO:0000250"/>
    <property type="project" value="UniProtKB"/>
</dbReference>
<dbReference type="GO" id="GO:0098880">
    <property type="term" value="P:maintenance of postsynaptic specialization structure"/>
    <property type="evidence" value="ECO:0007669"/>
    <property type="project" value="Ensembl"/>
</dbReference>
<dbReference type="GO" id="GO:1901799">
    <property type="term" value="P:negative regulation of proteasomal protein catabolic process"/>
    <property type="evidence" value="ECO:0000314"/>
    <property type="project" value="UniProtKB"/>
</dbReference>
<dbReference type="GO" id="GO:0031175">
    <property type="term" value="P:neuron projection development"/>
    <property type="evidence" value="ECO:0007669"/>
    <property type="project" value="Ensembl"/>
</dbReference>
<dbReference type="GO" id="GO:0030100">
    <property type="term" value="P:regulation of endocytosis"/>
    <property type="evidence" value="ECO:0000315"/>
    <property type="project" value="MGI"/>
</dbReference>
<dbReference type="GO" id="GO:0099149">
    <property type="term" value="P:regulation of postsynaptic neurotransmitter receptor internalization"/>
    <property type="evidence" value="ECO:0007669"/>
    <property type="project" value="Ensembl"/>
</dbReference>
<dbReference type="GO" id="GO:0035023">
    <property type="term" value="P:regulation of Rho protein signal transduction"/>
    <property type="evidence" value="ECO:0007669"/>
    <property type="project" value="Ensembl"/>
</dbReference>
<dbReference type="GO" id="GO:0051966">
    <property type="term" value="P:regulation of synaptic transmission, glutamatergic"/>
    <property type="evidence" value="ECO:0000315"/>
    <property type="project" value="MGI"/>
</dbReference>
<dbReference type="GO" id="GO:1900242">
    <property type="term" value="P:regulation of synaptic vesicle endocytosis"/>
    <property type="evidence" value="ECO:0007669"/>
    <property type="project" value="Ensembl"/>
</dbReference>
<dbReference type="GO" id="GO:0007165">
    <property type="term" value="P:signal transduction"/>
    <property type="evidence" value="ECO:0007669"/>
    <property type="project" value="InterPro"/>
</dbReference>
<dbReference type="GO" id="GO:0048488">
    <property type="term" value="P:synaptic vesicle endocytosis"/>
    <property type="evidence" value="ECO:0000315"/>
    <property type="project" value="MGI"/>
</dbReference>
<dbReference type="CDD" id="cd01249">
    <property type="entry name" value="BAR-PH_GRAF_family"/>
    <property type="match status" value="1"/>
</dbReference>
<dbReference type="CDD" id="cd07633">
    <property type="entry name" value="BAR_OPHN1"/>
    <property type="match status" value="1"/>
</dbReference>
<dbReference type="CDD" id="cd04374">
    <property type="entry name" value="RhoGAP_Graf"/>
    <property type="match status" value="1"/>
</dbReference>
<dbReference type="FunFam" id="2.30.29.30:FF:000183">
    <property type="entry name" value="Oligophrenin 1"/>
    <property type="match status" value="1"/>
</dbReference>
<dbReference type="FunFam" id="1.20.1270.60:FF:000001">
    <property type="entry name" value="Rho GTPase-activating protein 26"/>
    <property type="match status" value="1"/>
</dbReference>
<dbReference type="FunFam" id="1.10.555.10:FF:000008">
    <property type="entry name" value="Rho GTPase-activating protein 42"/>
    <property type="match status" value="1"/>
</dbReference>
<dbReference type="Gene3D" id="1.20.1270.60">
    <property type="entry name" value="Arfaptin homology (AH) domain/BAR domain"/>
    <property type="match status" value="1"/>
</dbReference>
<dbReference type="Gene3D" id="2.30.29.30">
    <property type="entry name" value="Pleckstrin-homology domain (PH domain)/Phosphotyrosine-binding domain (PTB)"/>
    <property type="match status" value="1"/>
</dbReference>
<dbReference type="Gene3D" id="1.10.555.10">
    <property type="entry name" value="Rho GTPase activation protein"/>
    <property type="match status" value="1"/>
</dbReference>
<dbReference type="InterPro" id="IPR027267">
    <property type="entry name" value="AH/BAR_dom_sf"/>
</dbReference>
<dbReference type="InterPro" id="IPR004148">
    <property type="entry name" value="BAR_dom"/>
</dbReference>
<dbReference type="InterPro" id="IPR047234">
    <property type="entry name" value="GRAF_fam"/>
</dbReference>
<dbReference type="InterPro" id="IPR047267">
    <property type="entry name" value="OPHN1_BAR"/>
</dbReference>
<dbReference type="InterPro" id="IPR011993">
    <property type="entry name" value="PH-like_dom_sf"/>
</dbReference>
<dbReference type="InterPro" id="IPR001849">
    <property type="entry name" value="PH_domain"/>
</dbReference>
<dbReference type="InterPro" id="IPR047225">
    <property type="entry name" value="PH_GRAF"/>
</dbReference>
<dbReference type="InterPro" id="IPR008936">
    <property type="entry name" value="Rho_GTPase_activation_prot"/>
</dbReference>
<dbReference type="InterPro" id="IPR000198">
    <property type="entry name" value="RhoGAP_dom"/>
</dbReference>
<dbReference type="PANTHER" id="PTHR12552">
    <property type="entry name" value="OLIGOPHRENIN 1"/>
    <property type="match status" value="1"/>
</dbReference>
<dbReference type="PANTHER" id="PTHR12552:SF2">
    <property type="entry name" value="OLIGOPHRENIN-1"/>
    <property type="match status" value="1"/>
</dbReference>
<dbReference type="Pfam" id="PF16746">
    <property type="entry name" value="BAR_3"/>
    <property type="match status" value="1"/>
</dbReference>
<dbReference type="Pfam" id="PF00169">
    <property type="entry name" value="PH"/>
    <property type="match status" value="1"/>
</dbReference>
<dbReference type="Pfam" id="PF00620">
    <property type="entry name" value="RhoGAP"/>
    <property type="match status" value="1"/>
</dbReference>
<dbReference type="SMART" id="SM00233">
    <property type="entry name" value="PH"/>
    <property type="match status" value="1"/>
</dbReference>
<dbReference type="SMART" id="SM00324">
    <property type="entry name" value="RhoGAP"/>
    <property type="match status" value="1"/>
</dbReference>
<dbReference type="SUPFAM" id="SSF103657">
    <property type="entry name" value="BAR/IMD domain-like"/>
    <property type="match status" value="1"/>
</dbReference>
<dbReference type="SUPFAM" id="SSF48350">
    <property type="entry name" value="GTPase activation domain, GAP"/>
    <property type="match status" value="1"/>
</dbReference>
<dbReference type="SUPFAM" id="SSF50729">
    <property type="entry name" value="PH domain-like"/>
    <property type="match status" value="1"/>
</dbReference>
<dbReference type="PROSITE" id="PS50003">
    <property type="entry name" value="PH_DOMAIN"/>
    <property type="match status" value="1"/>
</dbReference>
<dbReference type="PROSITE" id="PS50238">
    <property type="entry name" value="RHOGAP"/>
    <property type="match status" value="1"/>
</dbReference>
<reference key="1">
    <citation type="journal article" date="2005" name="Science">
        <title>The transcriptional landscape of the mammalian genome.</title>
        <authorList>
            <person name="Carninci P."/>
            <person name="Kasukawa T."/>
            <person name="Katayama S."/>
            <person name="Gough J."/>
            <person name="Frith M.C."/>
            <person name="Maeda N."/>
            <person name="Oyama R."/>
            <person name="Ravasi T."/>
            <person name="Lenhard B."/>
            <person name="Wells C."/>
            <person name="Kodzius R."/>
            <person name="Shimokawa K."/>
            <person name="Bajic V.B."/>
            <person name="Brenner S.E."/>
            <person name="Batalov S."/>
            <person name="Forrest A.R."/>
            <person name="Zavolan M."/>
            <person name="Davis M.J."/>
            <person name="Wilming L.G."/>
            <person name="Aidinis V."/>
            <person name="Allen J.E."/>
            <person name="Ambesi-Impiombato A."/>
            <person name="Apweiler R."/>
            <person name="Aturaliya R.N."/>
            <person name="Bailey T.L."/>
            <person name="Bansal M."/>
            <person name="Baxter L."/>
            <person name="Beisel K.W."/>
            <person name="Bersano T."/>
            <person name="Bono H."/>
            <person name="Chalk A.M."/>
            <person name="Chiu K.P."/>
            <person name="Choudhary V."/>
            <person name="Christoffels A."/>
            <person name="Clutterbuck D.R."/>
            <person name="Crowe M.L."/>
            <person name="Dalla E."/>
            <person name="Dalrymple B.P."/>
            <person name="de Bono B."/>
            <person name="Della Gatta G."/>
            <person name="di Bernardo D."/>
            <person name="Down T."/>
            <person name="Engstrom P."/>
            <person name="Fagiolini M."/>
            <person name="Faulkner G."/>
            <person name="Fletcher C.F."/>
            <person name="Fukushima T."/>
            <person name="Furuno M."/>
            <person name="Futaki S."/>
            <person name="Gariboldi M."/>
            <person name="Georgii-Hemming P."/>
            <person name="Gingeras T.R."/>
            <person name="Gojobori T."/>
            <person name="Green R.E."/>
            <person name="Gustincich S."/>
            <person name="Harbers M."/>
            <person name="Hayashi Y."/>
            <person name="Hensch T.K."/>
            <person name="Hirokawa N."/>
            <person name="Hill D."/>
            <person name="Huminiecki L."/>
            <person name="Iacono M."/>
            <person name="Ikeo K."/>
            <person name="Iwama A."/>
            <person name="Ishikawa T."/>
            <person name="Jakt M."/>
            <person name="Kanapin A."/>
            <person name="Katoh M."/>
            <person name="Kawasawa Y."/>
            <person name="Kelso J."/>
            <person name="Kitamura H."/>
            <person name="Kitano H."/>
            <person name="Kollias G."/>
            <person name="Krishnan S.P."/>
            <person name="Kruger A."/>
            <person name="Kummerfeld S.K."/>
            <person name="Kurochkin I.V."/>
            <person name="Lareau L.F."/>
            <person name="Lazarevic D."/>
            <person name="Lipovich L."/>
            <person name="Liu J."/>
            <person name="Liuni S."/>
            <person name="McWilliam S."/>
            <person name="Madan Babu M."/>
            <person name="Madera M."/>
            <person name="Marchionni L."/>
            <person name="Matsuda H."/>
            <person name="Matsuzawa S."/>
            <person name="Miki H."/>
            <person name="Mignone F."/>
            <person name="Miyake S."/>
            <person name="Morris K."/>
            <person name="Mottagui-Tabar S."/>
            <person name="Mulder N."/>
            <person name="Nakano N."/>
            <person name="Nakauchi H."/>
            <person name="Ng P."/>
            <person name="Nilsson R."/>
            <person name="Nishiguchi S."/>
            <person name="Nishikawa S."/>
            <person name="Nori F."/>
            <person name="Ohara O."/>
            <person name="Okazaki Y."/>
            <person name="Orlando V."/>
            <person name="Pang K.C."/>
            <person name="Pavan W.J."/>
            <person name="Pavesi G."/>
            <person name="Pesole G."/>
            <person name="Petrovsky N."/>
            <person name="Piazza S."/>
            <person name="Reed J."/>
            <person name="Reid J.F."/>
            <person name="Ring B.Z."/>
            <person name="Ringwald M."/>
            <person name="Rost B."/>
            <person name="Ruan Y."/>
            <person name="Salzberg S.L."/>
            <person name="Sandelin A."/>
            <person name="Schneider C."/>
            <person name="Schoenbach C."/>
            <person name="Sekiguchi K."/>
            <person name="Semple C.A."/>
            <person name="Seno S."/>
            <person name="Sessa L."/>
            <person name="Sheng Y."/>
            <person name="Shibata Y."/>
            <person name="Shimada H."/>
            <person name="Shimada K."/>
            <person name="Silva D."/>
            <person name="Sinclair B."/>
            <person name="Sperling S."/>
            <person name="Stupka E."/>
            <person name="Sugiura K."/>
            <person name="Sultana R."/>
            <person name="Takenaka Y."/>
            <person name="Taki K."/>
            <person name="Tammoja K."/>
            <person name="Tan S.L."/>
            <person name="Tang S."/>
            <person name="Taylor M.S."/>
            <person name="Tegner J."/>
            <person name="Teichmann S.A."/>
            <person name="Ueda H.R."/>
            <person name="van Nimwegen E."/>
            <person name="Verardo R."/>
            <person name="Wei C.L."/>
            <person name="Yagi K."/>
            <person name="Yamanishi H."/>
            <person name="Zabarovsky E."/>
            <person name="Zhu S."/>
            <person name="Zimmer A."/>
            <person name="Hide W."/>
            <person name="Bult C."/>
            <person name="Grimmond S.M."/>
            <person name="Teasdale R.D."/>
            <person name="Liu E.T."/>
            <person name="Brusic V."/>
            <person name="Quackenbush J."/>
            <person name="Wahlestedt C."/>
            <person name="Mattick J.S."/>
            <person name="Hume D.A."/>
            <person name="Kai C."/>
            <person name="Sasaki D."/>
            <person name="Tomaru Y."/>
            <person name="Fukuda S."/>
            <person name="Kanamori-Katayama M."/>
            <person name="Suzuki M."/>
            <person name="Aoki J."/>
            <person name="Arakawa T."/>
            <person name="Iida J."/>
            <person name="Imamura K."/>
            <person name="Itoh M."/>
            <person name="Kato T."/>
            <person name="Kawaji H."/>
            <person name="Kawagashira N."/>
            <person name="Kawashima T."/>
            <person name="Kojima M."/>
            <person name="Kondo S."/>
            <person name="Konno H."/>
            <person name="Nakano K."/>
            <person name="Ninomiya N."/>
            <person name="Nishio T."/>
            <person name="Okada M."/>
            <person name="Plessy C."/>
            <person name="Shibata K."/>
            <person name="Shiraki T."/>
            <person name="Suzuki S."/>
            <person name="Tagami M."/>
            <person name="Waki K."/>
            <person name="Watahiki A."/>
            <person name="Okamura-Oho Y."/>
            <person name="Suzuki H."/>
            <person name="Kawai J."/>
            <person name="Hayashizaki Y."/>
        </authorList>
    </citation>
    <scope>NUCLEOTIDE SEQUENCE [LARGE SCALE MRNA]</scope>
    <source>
        <strain>C57BL/6J</strain>
        <tissue>Cerebellum</tissue>
        <tissue>Eye</tissue>
        <tissue>Testis</tissue>
    </source>
</reference>
<reference key="2">
    <citation type="journal article" date="2004" name="Genome Res.">
        <title>The status, quality, and expansion of the NIH full-length cDNA project: the Mammalian Gene Collection (MGC).</title>
        <authorList>
            <consortium name="The MGC Project Team"/>
        </authorList>
    </citation>
    <scope>NUCLEOTIDE SEQUENCE [LARGE SCALE MRNA]</scope>
</reference>
<reference key="3">
    <citation type="journal article" date="2010" name="Cell">
        <title>A tissue-specific atlas of mouse protein phosphorylation and expression.</title>
        <authorList>
            <person name="Huttlin E.L."/>
            <person name="Jedrychowski M.P."/>
            <person name="Elias J.E."/>
            <person name="Goswami T."/>
            <person name="Rad R."/>
            <person name="Beausoleil S.A."/>
            <person name="Villen J."/>
            <person name="Haas W."/>
            <person name="Sowa M.E."/>
            <person name="Gygi S.P."/>
        </authorList>
    </citation>
    <scope>IDENTIFICATION BY MASS SPECTROMETRY [LARGE SCALE ANALYSIS]</scope>
    <source>
        <tissue>Brain</tissue>
        <tissue>Kidney</tissue>
    </source>
</reference>
<reference key="4">
    <citation type="journal article" date="2011" name="Nat. Neurosci.">
        <title>A circadian clock in hippocampus is regulated by interaction between oligophrenin-1 and Rev-erbalpha.</title>
        <authorList>
            <person name="Valnegri P."/>
            <person name="Khelfaoui M."/>
            <person name="Dorseuil O."/>
            <person name="Bassani S."/>
            <person name="Lagneaux C."/>
            <person name="Gianfelice A."/>
            <person name="Benfante R."/>
            <person name="Chelly J."/>
            <person name="Billuart P."/>
            <person name="Sala C."/>
            <person name="Passafaro M."/>
        </authorList>
    </citation>
    <scope>FUNCTION</scope>
    <scope>SUBCELLULAR LOCATION</scope>
    <scope>INTERACTION WITH NR1D1</scope>
</reference>
<proteinExistence type="evidence at protein level"/>